<reference key="1">
    <citation type="submission" date="2008-06" db="EMBL/GenBank/DDBJ databases">
        <title>Complete sequence of Pelodictyon phaeoclathratiforme BU-1.</title>
        <authorList>
            <consortium name="US DOE Joint Genome Institute"/>
            <person name="Lucas S."/>
            <person name="Copeland A."/>
            <person name="Lapidus A."/>
            <person name="Glavina del Rio T."/>
            <person name="Dalin E."/>
            <person name="Tice H."/>
            <person name="Bruce D."/>
            <person name="Goodwin L."/>
            <person name="Pitluck S."/>
            <person name="Schmutz J."/>
            <person name="Larimer F."/>
            <person name="Land M."/>
            <person name="Hauser L."/>
            <person name="Kyrpides N."/>
            <person name="Mikhailova N."/>
            <person name="Liu Z."/>
            <person name="Li T."/>
            <person name="Zhao F."/>
            <person name="Overmann J."/>
            <person name="Bryant D.A."/>
            <person name="Richardson P."/>
        </authorList>
    </citation>
    <scope>NUCLEOTIDE SEQUENCE [LARGE SCALE GENOMIC DNA]</scope>
    <source>
        <strain>DSM 5477 / BU-1</strain>
    </source>
</reference>
<name>ILVC_PELPB</name>
<keyword id="KW-0028">Amino-acid biosynthesis</keyword>
<keyword id="KW-0100">Branched-chain amino acid biosynthesis</keyword>
<keyword id="KW-0460">Magnesium</keyword>
<keyword id="KW-0479">Metal-binding</keyword>
<keyword id="KW-0521">NADP</keyword>
<keyword id="KW-0560">Oxidoreductase</keyword>
<keyword id="KW-1185">Reference proteome</keyword>
<evidence type="ECO:0000255" key="1">
    <source>
        <dbReference type="HAMAP-Rule" id="MF_00435"/>
    </source>
</evidence>
<evidence type="ECO:0000255" key="2">
    <source>
        <dbReference type="PROSITE-ProRule" id="PRU01197"/>
    </source>
</evidence>
<evidence type="ECO:0000255" key="3">
    <source>
        <dbReference type="PROSITE-ProRule" id="PRU01198"/>
    </source>
</evidence>
<dbReference type="EC" id="1.1.1.86" evidence="1"/>
<dbReference type="EMBL" id="CP001110">
    <property type="protein sequence ID" value="ACF44375.1"/>
    <property type="molecule type" value="Genomic_DNA"/>
</dbReference>
<dbReference type="RefSeq" id="WP_012508852.1">
    <property type="nucleotide sequence ID" value="NC_011060.1"/>
</dbReference>
<dbReference type="SMR" id="B4SDK7"/>
<dbReference type="STRING" id="324925.Ppha_2172"/>
<dbReference type="KEGG" id="pph:Ppha_2172"/>
<dbReference type="eggNOG" id="COG0059">
    <property type="taxonomic scope" value="Bacteria"/>
</dbReference>
<dbReference type="HOGENOM" id="CLU_033821_0_1_10"/>
<dbReference type="OrthoDB" id="9804088at2"/>
<dbReference type="UniPathway" id="UPA00047">
    <property type="reaction ID" value="UER00056"/>
</dbReference>
<dbReference type="UniPathway" id="UPA00049">
    <property type="reaction ID" value="UER00060"/>
</dbReference>
<dbReference type="Proteomes" id="UP000002724">
    <property type="component" value="Chromosome"/>
</dbReference>
<dbReference type="GO" id="GO:0005829">
    <property type="term" value="C:cytosol"/>
    <property type="evidence" value="ECO:0007669"/>
    <property type="project" value="TreeGrafter"/>
</dbReference>
<dbReference type="GO" id="GO:0004455">
    <property type="term" value="F:ketol-acid reductoisomerase activity"/>
    <property type="evidence" value="ECO:0007669"/>
    <property type="project" value="UniProtKB-UniRule"/>
</dbReference>
<dbReference type="GO" id="GO:0000287">
    <property type="term" value="F:magnesium ion binding"/>
    <property type="evidence" value="ECO:0007669"/>
    <property type="project" value="UniProtKB-UniRule"/>
</dbReference>
<dbReference type="GO" id="GO:0050661">
    <property type="term" value="F:NADP binding"/>
    <property type="evidence" value="ECO:0007669"/>
    <property type="project" value="InterPro"/>
</dbReference>
<dbReference type="GO" id="GO:0009097">
    <property type="term" value="P:isoleucine biosynthetic process"/>
    <property type="evidence" value="ECO:0007669"/>
    <property type="project" value="UniProtKB-UniRule"/>
</dbReference>
<dbReference type="GO" id="GO:0009099">
    <property type="term" value="P:L-valine biosynthetic process"/>
    <property type="evidence" value="ECO:0007669"/>
    <property type="project" value="UniProtKB-UniRule"/>
</dbReference>
<dbReference type="FunFam" id="3.40.50.720:FF:000023">
    <property type="entry name" value="Ketol-acid reductoisomerase (NADP(+))"/>
    <property type="match status" value="1"/>
</dbReference>
<dbReference type="Gene3D" id="6.10.240.10">
    <property type="match status" value="1"/>
</dbReference>
<dbReference type="Gene3D" id="3.40.50.720">
    <property type="entry name" value="NAD(P)-binding Rossmann-like Domain"/>
    <property type="match status" value="1"/>
</dbReference>
<dbReference type="HAMAP" id="MF_00435">
    <property type="entry name" value="IlvC"/>
    <property type="match status" value="1"/>
</dbReference>
<dbReference type="InterPro" id="IPR008927">
    <property type="entry name" value="6-PGluconate_DH-like_C_sf"/>
</dbReference>
<dbReference type="InterPro" id="IPR013023">
    <property type="entry name" value="KARI"/>
</dbReference>
<dbReference type="InterPro" id="IPR000506">
    <property type="entry name" value="KARI_C"/>
</dbReference>
<dbReference type="InterPro" id="IPR013116">
    <property type="entry name" value="KARI_N"/>
</dbReference>
<dbReference type="InterPro" id="IPR014359">
    <property type="entry name" value="KARI_prok"/>
</dbReference>
<dbReference type="InterPro" id="IPR036291">
    <property type="entry name" value="NAD(P)-bd_dom_sf"/>
</dbReference>
<dbReference type="NCBIfam" id="TIGR00465">
    <property type="entry name" value="ilvC"/>
    <property type="match status" value="1"/>
</dbReference>
<dbReference type="NCBIfam" id="NF004017">
    <property type="entry name" value="PRK05479.1"/>
    <property type="match status" value="1"/>
</dbReference>
<dbReference type="NCBIfam" id="NF009940">
    <property type="entry name" value="PRK13403.1"/>
    <property type="match status" value="1"/>
</dbReference>
<dbReference type="PANTHER" id="PTHR21371">
    <property type="entry name" value="KETOL-ACID REDUCTOISOMERASE, MITOCHONDRIAL"/>
    <property type="match status" value="1"/>
</dbReference>
<dbReference type="PANTHER" id="PTHR21371:SF1">
    <property type="entry name" value="KETOL-ACID REDUCTOISOMERASE, MITOCHONDRIAL"/>
    <property type="match status" value="1"/>
</dbReference>
<dbReference type="Pfam" id="PF01450">
    <property type="entry name" value="KARI_C"/>
    <property type="match status" value="1"/>
</dbReference>
<dbReference type="Pfam" id="PF07991">
    <property type="entry name" value="KARI_N"/>
    <property type="match status" value="1"/>
</dbReference>
<dbReference type="PIRSF" id="PIRSF000116">
    <property type="entry name" value="IlvC_gammaproteo"/>
    <property type="match status" value="1"/>
</dbReference>
<dbReference type="SUPFAM" id="SSF48179">
    <property type="entry name" value="6-phosphogluconate dehydrogenase C-terminal domain-like"/>
    <property type="match status" value="1"/>
</dbReference>
<dbReference type="SUPFAM" id="SSF51735">
    <property type="entry name" value="NAD(P)-binding Rossmann-fold domains"/>
    <property type="match status" value="1"/>
</dbReference>
<dbReference type="PROSITE" id="PS51851">
    <property type="entry name" value="KARI_C"/>
    <property type="match status" value="1"/>
</dbReference>
<dbReference type="PROSITE" id="PS51850">
    <property type="entry name" value="KARI_N"/>
    <property type="match status" value="1"/>
</dbReference>
<sequence>MNVYYEQDADLGYLQGKNIAVLGYGSQGHAHALNLKESGLNVCVGLRPESASCAKAREAGLEVNTVAEATKWADIVMVLLPDQNQKAVYDAEIAPNLVAGNTLAFGHGFNIHYKQIIPAESINVIMIAPKSPGHLVRRTFTEGNGVPCLIAVHQDATGEAKQQALAWAKALGGTKAGVIETSIKNETETDLFGEQAVLCGGSAELIKAGFETLVEAGYPEELAYFECMHELKLIVDLYYEGGLSRMNYSVSDTAEYGGMTRGPRLITPAVKAEMKKILEEVQDGRFAKEFIDECNGGYKNLNKLREENSGHAIEKVGAKLRDMMSWLIKK</sequence>
<protein>
    <recommendedName>
        <fullName evidence="1">Ketol-acid reductoisomerase (NADP(+))</fullName>
        <shortName evidence="1">KARI</shortName>
        <ecNumber evidence="1">1.1.1.86</ecNumber>
    </recommendedName>
    <alternativeName>
        <fullName evidence="1">Acetohydroxy-acid isomeroreductase</fullName>
        <shortName evidence="1">AHIR</shortName>
    </alternativeName>
    <alternativeName>
        <fullName evidence="1">Alpha-keto-beta-hydroxylacyl reductoisomerase</fullName>
    </alternativeName>
    <alternativeName>
        <fullName evidence="1">Ketol-acid reductoisomerase type 1</fullName>
    </alternativeName>
    <alternativeName>
        <fullName evidence="1">Ketol-acid reductoisomerase type I</fullName>
    </alternativeName>
</protein>
<comment type="function">
    <text evidence="1">Involved in the biosynthesis of branched-chain amino acids (BCAA). Catalyzes an alkyl-migration followed by a ketol-acid reduction of (S)-2-acetolactate (S2AL) to yield (R)-2,3-dihydroxy-isovalerate. In the isomerase reaction, S2AL is rearranged via a Mg-dependent methyl migration to produce 3-hydroxy-3-methyl-2-ketobutyrate (HMKB). In the reductase reaction, this 2-ketoacid undergoes a metal-dependent reduction by NADPH to yield (R)-2,3-dihydroxy-isovalerate.</text>
</comment>
<comment type="catalytic activity">
    <reaction evidence="1">
        <text>(2R)-2,3-dihydroxy-3-methylbutanoate + NADP(+) = (2S)-2-acetolactate + NADPH + H(+)</text>
        <dbReference type="Rhea" id="RHEA:22068"/>
        <dbReference type="ChEBI" id="CHEBI:15378"/>
        <dbReference type="ChEBI" id="CHEBI:49072"/>
        <dbReference type="ChEBI" id="CHEBI:57783"/>
        <dbReference type="ChEBI" id="CHEBI:58349"/>
        <dbReference type="ChEBI" id="CHEBI:58476"/>
        <dbReference type="EC" id="1.1.1.86"/>
    </reaction>
</comment>
<comment type="catalytic activity">
    <reaction evidence="1">
        <text>(2R,3R)-2,3-dihydroxy-3-methylpentanoate + NADP(+) = (S)-2-ethyl-2-hydroxy-3-oxobutanoate + NADPH + H(+)</text>
        <dbReference type="Rhea" id="RHEA:13493"/>
        <dbReference type="ChEBI" id="CHEBI:15378"/>
        <dbReference type="ChEBI" id="CHEBI:49256"/>
        <dbReference type="ChEBI" id="CHEBI:49258"/>
        <dbReference type="ChEBI" id="CHEBI:57783"/>
        <dbReference type="ChEBI" id="CHEBI:58349"/>
        <dbReference type="EC" id="1.1.1.86"/>
    </reaction>
</comment>
<comment type="cofactor">
    <cofactor evidence="1">
        <name>Mg(2+)</name>
        <dbReference type="ChEBI" id="CHEBI:18420"/>
    </cofactor>
    <text evidence="1">Binds 2 magnesium ions per subunit.</text>
</comment>
<comment type="pathway">
    <text evidence="1">Amino-acid biosynthesis; L-isoleucine biosynthesis; L-isoleucine from 2-oxobutanoate: step 2/4.</text>
</comment>
<comment type="pathway">
    <text evidence="1">Amino-acid biosynthesis; L-valine biosynthesis; L-valine from pyruvate: step 2/4.</text>
</comment>
<comment type="similarity">
    <text evidence="1">Belongs to the ketol-acid reductoisomerase family.</text>
</comment>
<feature type="chain" id="PRO_1000124316" description="Ketol-acid reductoisomerase (NADP(+))">
    <location>
        <begin position="1"/>
        <end position="330"/>
    </location>
</feature>
<feature type="domain" description="KARI N-terminal Rossmann" evidence="2">
    <location>
        <begin position="1"/>
        <end position="181"/>
    </location>
</feature>
<feature type="domain" description="KARI C-terminal knotted" evidence="3">
    <location>
        <begin position="182"/>
        <end position="327"/>
    </location>
</feature>
<feature type="active site" evidence="1">
    <location>
        <position position="107"/>
    </location>
</feature>
<feature type="binding site" evidence="1">
    <location>
        <begin position="24"/>
        <end position="27"/>
    </location>
    <ligand>
        <name>NADP(+)</name>
        <dbReference type="ChEBI" id="CHEBI:58349"/>
    </ligand>
</feature>
<feature type="binding site" evidence="1">
    <location>
        <position position="47"/>
    </location>
    <ligand>
        <name>NADP(+)</name>
        <dbReference type="ChEBI" id="CHEBI:58349"/>
    </ligand>
</feature>
<feature type="binding site" evidence="1">
    <location>
        <position position="50"/>
    </location>
    <ligand>
        <name>NADP(+)</name>
        <dbReference type="ChEBI" id="CHEBI:58349"/>
    </ligand>
</feature>
<feature type="binding site" evidence="1">
    <location>
        <position position="52"/>
    </location>
    <ligand>
        <name>NADP(+)</name>
        <dbReference type="ChEBI" id="CHEBI:58349"/>
    </ligand>
</feature>
<feature type="binding site" evidence="1">
    <location>
        <begin position="82"/>
        <end position="85"/>
    </location>
    <ligand>
        <name>NADP(+)</name>
        <dbReference type="ChEBI" id="CHEBI:58349"/>
    </ligand>
</feature>
<feature type="binding site" evidence="1">
    <location>
        <position position="133"/>
    </location>
    <ligand>
        <name>NADP(+)</name>
        <dbReference type="ChEBI" id="CHEBI:58349"/>
    </ligand>
</feature>
<feature type="binding site" evidence="1">
    <location>
        <position position="190"/>
    </location>
    <ligand>
        <name>Mg(2+)</name>
        <dbReference type="ChEBI" id="CHEBI:18420"/>
        <label>1</label>
    </ligand>
</feature>
<feature type="binding site" evidence="1">
    <location>
        <position position="190"/>
    </location>
    <ligand>
        <name>Mg(2+)</name>
        <dbReference type="ChEBI" id="CHEBI:18420"/>
        <label>2</label>
    </ligand>
</feature>
<feature type="binding site" evidence="1">
    <location>
        <position position="194"/>
    </location>
    <ligand>
        <name>Mg(2+)</name>
        <dbReference type="ChEBI" id="CHEBI:18420"/>
        <label>1</label>
    </ligand>
</feature>
<feature type="binding site" evidence="1">
    <location>
        <position position="226"/>
    </location>
    <ligand>
        <name>Mg(2+)</name>
        <dbReference type="ChEBI" id="CHEBI:18420"/>
        <label>2</label>
    </ligand>
</feature>
<feature type="binding site" evidence="1">
    <location>
        <position position="230"/>
    </location>
    <ligand>
        <name>Mg(2+)</name>
        <dbReference type="ChEBI" id="CHEBI:18420"/>
        <label>2</label>
    </ligand>
</feature>
<feature type="binding site" evidence="1">
    <location>
        <position position="251"/>
    </location>
    <ligand>
        <name>substrate</name>
    </ligand>
</feature>
<gene>
    <name evidence="1" type="primary">ilvC</name>
    <name type="ordered locus">Ppha_2172</name>
</gene>
<accession>B4SDK7</accession>
<organism>
    <name type="scientific">Pelodictyon phaeoclathratiforme (strain DSM 5477 / BU-1)</name>
    <dbReference type="NCBI Taxonomy" id="324925"/>
    <lineage>
        <taxon>Bacteria</taxon>
        <taxon>Pseudomonadati</taxon>
        <taxon>Chlorobiota</taxon>
        <taxon>Chlorobiia</taxon>
        <taxon>Chlorobiales</taxon>
        <taxon>Chlorobiaceae</taxon>
        <taxon>Chlorobium/Pelodictyon group</taxon>
        <taxon>Pelodictyon</taxon>
    </lineage>
</organism>
<proteinExistence type="inferred from homology"/>